<dbReference type="EC" id="3.1.1.-" evidence="1"/>
<dbReference type="EMBL" id="CP000886">
    <property type="protein sequence ID" value="ABX70785.1"/>
    <property type="molecule type" value="Genomic_DNA"/>
</dbReference>
<dbReference type="RefSeq" id="WP_000049161.1">
    <property type="nucleotide sequence ID" value="NC_010102.1"/>
</dbReference>
<dbReference type="SMR" id="A9N508"/>
<dbReference type="GeneID" id="66758606"/>
<dbReference type="KEGG" id="spq:SPAB_05516"/>
<dbReference type="PATRIC" id="fig|1016998.12.peg.5169"/>
<dbReference type="HOGENOM" id="CLU_074775_0_0_6"/>
<dbReference type="BioCyc" id="SENT1016998:SPAB_RS22520-MONOMER"/>
<dbReference type="UniPathway" id="UPA00263">
    <property type="reaction ID" value="UER00377"/>
</dbReference>
<dbReference type="Proteomes" id="UP000008556">
    <property type="component" value="Chromosome"/>
</dbReference>
<dbReference type="GO" id="GO:0005737">
    <property type="term" value="C:cytoplasm"/>
    <property type="evidence" value="ECO:0007669"/>
    <property type="project" value="UniProtKB-SubCell"/>
</dbReference>
<dbReference type="GO" id="GO:0035460">
    <property type="term" value="F:L-ascorbate 6-phosphate lactonase activity"/>
    <property type="evidence" value="ECO:0007669"/>
    <property type="project" value="InterPro"/>
</dbReference>
<dbReference type="GO" id="GO:0030145">
    <property type="term" value="F:manganese ion binding"/>
    <property type="evidence" value="ECO:0007669"/>
    <property type="project" value="InterPro"/>
</dbReference>
<dbReference type="GO" id="GO:0019854">
    <property type="term" value="P:L-ascorbic acid catabolic process"/>
    <property type="evidence" value="ECO:0007669"/>
    <property type="project" value="UniProtKB-UniRule"/>
</dbReference>
<dbReference type="CDD" id="cd16284">
    <property type="entry name" value="UlaG-like_MBL-fold"/>
    <property type="match status" value="1"/>
</dbReference>
<dbReference type="FunFam" id="3.60.15.10:FF:000004">
    <property type="entry name" value="Probable L-ascorbate-6-phosphate lactonase UlaG"/>
    <property type="match status" value="1"/>
</dbReference>
<dbReference type="Gene3D" id="3.60.15.10">
    <property type="entry name" value="Ribonuclease Z/Hydroxyacylglutathione hydrolase-like"/>
    <property type="match status" value="1"/>
</dbReference>
<dbReference type="HAMAP" id="MF_01266">
    <property type="entry name" value="UlaG"/>
    <property type="match status" value="1"/>
</dbReference>
<dbReference type="InterPro" id="IPR023951">
    <property type="entry name" value="L-ascorbate_6P_UlaG"/>
</dbReference>
<dbReference type="InterPro" id="IPR001279">
    <property type="entry name" value="Metallo-B-lactamas"/>
</dbReference>
<dbReference type="InterPro" id="IPR036866">
    <property type="entry name" value="RibonucZ/Hydroxyglut_hydro"/>
</dbReference>
<dbReference type="InterPro" id="IPR048021">
    <property type="entry name" value="UlaG-like_MBL-fold"/>
</dbReference>
<dbReference type="InterPro" id="IPR050114">
    <property type="entry name" value="UPF0173_UPF0282_UlaG_hydrolase"/>
</dbReference>
<dbReference type="NCBIfam" id="NF008688">
    <property type="entry name" value="PRK11709.1"/>
    <property type="match status" value="1"/>
</dbReference>
<dbReference type="PANTHER" id="PTHR43546:SF9">
    <property type="entry name" value="L-ASCORBATE-6-PHOSPHATE LACTONASE ULAG-RELATED"/>
    <property type="match status" value="1"/>
</dbReference>
<dbReference type="PANTHER" id="PTHR43546">
    <property type="entry name" value="UPF0173 METAL-DEPENDENT HYDROLASE MJ1163-RELATED"/>
    <property type="match status" value="1"/>
</dbReference>
<dbReference type="Pfam" id="PF12706">
    <property type="entry name" value="Lactamase_B_2"/>
    <property type="match status" value="1"/>
</dbReference>
<dbReference type="SUPFAM" id="SSF56281">
    <property type="entry name" value="Metallo-hydrolase/oxidoreductase"/>
    <property type="match status" value="1"/>
</dbReference>
<sequence>MSKVQSITRESWILSTFPEWGSWLNEEIEQEQVAPGTFAMWWLGCTGIWLKSEGGTNVCVDFWCGTGKQSHGNPLMKTGHQMQRMAGVKKLQPNLRTTPFVLDPFAIRQIDAVLATHDHNDHIDVNVAAAVMQNCADDVPFIGPQTCVDLWVGWGVPKERCIVVKPGDVVKVKDIEIHALDAFDRTALITLPADQKAAGVLPDGMDVRAVNYLFKTPGGNLYHSGDSHYSNYYAKHGNEHQIDVALGSYGENPRGITDKMTSADILRMAESLNTKVVIPFHHDIWSNFQADPQEIRVLWEMKKDRLKYGFKPFIWQVGGKFTWPLDKDNFEYHYPRGFDDCFTIEPDLPFKSFL</sequence>
<proteinExistence type="inferred from homology"/>
<evidence type="ECO:0000255" key="1">
    <source>
        <dbReference type="HAMAP-Rule" id="MF_01266"/>
    </source>
</evidence>
<keyword id="KW-0963">Cytoplasm</keyword>
<keyword id="KW-0378">Hydrolase</keyword>
<gene>
    <name evidence="1" type="primary">ulaG</name>
    <name type="ordered locus">SPAB_05516</name>
</gene>
<reference key="1">
    <citation type="submission" date="2007-11" db="EMBL/GenBank/DDBJ databases">
        <authorList>
            <consortium name="The Salmonella enterica serovar Paratyphi B Genome Sequencing Project"/>
            <person name="McClelland M."/>
            <person name="Sanderson E.K."/>
            <person name="Porwollik S."/>
            <person name="Spieth J."/>
            <person name="Clifton W.S."/>
            <person name="Fulton R."/>
            <person name="Cordes M."/>
            <person name="Wollam A."/>
            <person name="Shah N."/>
            <person name="Pepin K."/>
            <person name="Bhonagiri V."/>
            <person name="Nash W."/>
            <person name="Johnson M."/>
            <person name="Thiruvilangam P."/>
            <person name="Wilson R."/>
        </authorList>
    </citation>
    <scope>NUCLEOTIDE SEQUENCE [LARGE SCALE GENOMIC DNA]</scope>
    <source>
        <strain>ATCC BAA-1250 / SPB7</strain>
    </source>
</reference>
<accession>A9N508</accession>
<feature type="chain" id="PRO_1000085825" description="Probable L-ascorbate-6-phosphate lactonase UlaG">
    <location>
        <begin position="1"/>
        <end position="354"/>
    </location>
</feature>
<organism>
    <name type="scientific">Salmonella paratyphi B (strain ATCC BAA-1250 / SPB7)</name>
    <dbReference type="NCBI Taxonomy" id="1016998"/>
    <lineage>
        <taxon>Bacteria</taxon>
        <taxon>Pseudomonadati</taxon>
        <taxon>Pseudomonadota</taxon>
        <taxon>Gammaproteobacteria</taxon>
        <taxon>Enterobacterales</taxon>
        <taxon>Enterobacteriaceae</taxon>
        <taxon>Salmonella</taxon>
    </lineage>
</organism>
<comment type="function">
    <text evidence="1">Probably catalyzes the hydrolysis of L-ascorbate-6-P into 3-keto-L-gulonate-6-P. Is essential for L-ascorbate utilization under anaerobic conditions.</text>
</comment>
<comment type="catalytic activity">
    <reaction evidence="1">
        <text>L-ascorbate 6-phosphate + H2O = 3-dehydro-L-gulonate 6-phosphate</text>
        <dbReference type="Rhea" id="RHEA:28803"/>
        <dbReference type="ChEBI" id="CHEBI:15377"/>
        <dbReference type="ChEBI" id="CHEBI:58774"/>
        <dbReference type="ChEBI" id="CHEBI:61698"/>
    </reaction>
</comment>
<comment type="cofactor">
    <cofactor evidence="1">
        <name>a divalent metal cation</name>
        <dbReference type="ChEBI" id="CHEBI:60240"/>
    </cofactor>
</comment>
<comment type="pathway">
    <text evidence="1">Cofactor degradation; L-ascorbate degradation; D-xylulose 5-phosphate from L-ascorbate: step 1/4.</text>
</comment>
<comment type="subcellular location">
    <subcellularLocation>
        <location evidence="1">Cytoplasm</location>
    </subcellularLocation>
</comment>
<comment type="induction">
    <text evidence="1">Induced by L-ascorbate. Repressed by UlaR.</text>
</comment>
<comment type="similarity">
    <text evidence="1">Belongs to the UlaG family.</text>
</comment>
<name>ULAG_SALPB</name>
<protein>
    <recommendedName>
        <fullName evidence="1">Probable L-ascorbate-6-phosphate lactonase UlaG</fullName>
        <ecNumber evidence="1">3.1.1.-</ecNumber>
    </recommendedName>
    <alternativeName>
        <fullName evidence="1">L-ascorbate utilization protein G</fullName>
    </alternativeName>
</protein>